<keyword id="KW-0240">DNA-directed RNA polymerase</keyword>
<keyword id="KW-0548">Nucleotidyltransferase</keyword>
<keyword id="KW-1185">Reference proteome</keyword>
<keyword id="KW-0804">Transcription</keyword>
<keyword id="KW-0808">Transferase</keyword>
<keyword id="KW-0946">Virion</keyword>
<protein>
    <recommendedName>
        <fullName>DNA-directed RNA polymerase subunit 1</fullName>
        <ecNumber>2.7.7.6</ecNumber>
    </recommendedName>
</protein>
<organismHost>
    <name type="scientific">Acanthamoeba polyphaga</name>
    <name type="common">Amoeba</name>
    <dbReference type="NCBI Taxonomy" id="5757"/>
</organismHost>
<evidence type="ECO:0000250" key="1"/>
<evidence type="ECO:0000269" key="2">
    <source>
    </source>
</evidence>
<evidence type="ECO:0000305" key="3"/>
<organism>
    <name type="scientific">Acanthamoeba polyphaga mimivirus</name>
    <name type="common">APMV</name>
    <dbReference type="NCBI Taxonomy" id="212035"/>
    <lineage>
        <taxon>Viruses</taxon>
        <taxon>Varidnaviria</taxon>
        <taxon>Bamfordvirae</taxon>
        <taxon>Nucleocytoviricota</taxon>
        <taxon>Megaviricetes</taxon>
        <taxon>Imitervirales</taxon>
        <taxon>Mimiviridae</taxon>
        <taxon>Megamimivirinae</taxon>
        <taxon>Mimivirus</taxon>
        <taxon>Mimivirus bradfordmassiliense</taxon>
    </lineage>
</organism>
<reference key="1">
    <citation type="journal article" date="2004" name="Science">
        <title>The 1.2-megabase genome sequence of Mimivirus.</title>
        <authorList>
            <person name="Raoult D."/>
            <person name="Audic S."/>
            <person name="Robert C."/>
            <person name="Abergel C."/>
            <person name="Renesto P."/>
            <person name="Ogata H."/>
            <person name="La Scola B."/>
            <person name="Susan M."/>
            <person name="Claverie J.-M."/>
        </authorList>
    </citation>
    <scope>NUCLEOTIDE SEQUENCE [LARGE SCALE GENOMIC DNA]</scope>
    <source>
        <strain>Rowbotham-Bradford</strain>
    </source>
</reference>
<reference key="2">
    <citation type="journal article" date="2006" name="J. Virol.">
        <title>Mimivirus giant particles incorporate a large fraction of anonymous and unique gene products.</title>
        <authorList>
            <person name="Renesto P."/>
            <person name="Abergel C."/>
            <person name="Decloquement P."/>
            <person name="Moinier D."/>
            <person name="Azza S."/>
            <person name="Ogata H."/>
            <person name="Fourquet P."/>
            <person name="Gorvel J.-P."/>
            <person name="Claverie J.-M."/>
            <person name="Raoult D."/>
        </authorList>
    </citation>
    <scope>IDENTIFICATION BY MASS SPECTROMETRY [LARGE SCALE ANALYSIS]</scope>
    <scope>SUBCELLULAR LOCATION</scope>
</reference>
<dbReference type="EC" id="2.7.7.6"/>
<dbReference type="EMBL" id="AY653733">
    <property type="protein sequence ID" value="AAQ09585.2"/>
    <property type="molecule type" value="Genomic_DNA"/>
</dbReference>
<dbReference type="SMR" id="Q7T6X5"/>
<dbReference type="KEGG" id="vg:9925132"/>
<dbReference type="Proteomes" id="UP000001134">
    <property type="component" value="Genome"/>
</dbReference>
<dbReference type="GO" id="GO:0000428">
    <property type="term" value="C:DNA-directed RNA polymerase complex"/>
    <property type="evidence" value="ECO:0007669"/>
    <property type="project" value="UniProtKB-KW"/>
</dbReference>
<dbReference type="GO" id="GO:0044423">
    <property type="term" value="C:virion component"/>
    <property type="evidence" value="ECO:0007669"/>
    <property type="project" value="UniProtKB-KW"/>
</dbReference>
<dbReference type="GO" id="GO:0003677">
    <property type="term" value="F:DNA binding"/>
    <property type="evidence" value="ECO:0007669"/>
    <property type="project" value="InterPro"/>
</dbReference>
<dbReference type="GO" id="GO:0003899">
    <property type="term" value="F:DNA-directed RNA polymerase activity"/>
    <property type="evidence" value="ECO:0007669"/>
    <property type="project" value="UniProtKB-EC"/>
</dbReference>
<dbReference type="GO" id="GO:0006351">
    <property type="term" value="P:DNA-templated transcription"/>
    <property type="evidence" value="ECO:0007669"/>
    <property type="project" value="InterPro"/>
</dbReference>
<dbReference type="FunFam" id="2.40.40.20:FF:000019">
    <property type="entry name" value="DNA-directed RNA polymerase II subunit RPB1"/>
    <property type="match status" value="1"/>
</dbReference>
<dbReference type="Gene3D" id="1.10.132.30">
    <property type="match status" value="1"/>
</dbReference>
<dbReference type="Gene3D" id="1.10.150.390">
    <property type="match status" value="1"/>
</dbReference>
<dbReference type="Gene3D" id="2.40.40.20">
    <property type="match status" value="1"/>
</dbReference>
<dbReference type="Gene3D" id="3.30.1360.140">
    <property type="match status" value="1"/>
</dbReference>
<dbReference type="Gene3D" id="6.10.250.2940">
    <property type="match status" value="1"/>
</dbReference>
<dbReference type="Gene3D" id="6.20.50.80">
    <property type="match status" value="1"/>
</dbReference>
<dbReference type="Gene3D" id="3.30.1490.180">
    <property type="entry name" value="RNA polymerase ii"/>
    <property type="match status" value="1"/>
</dbReference>
<dbReference type="Gene3D" id="4.10.860.120">
    <property type="entry name" value="RNA polymerase II, clamp domain"/>
    <property type="match status" value="1"/>
</dbReference>
<dbReference type="Gene3D" id="1.10.274.100">
    <property type="entry name" value="RNA polymerase Rpb1, domain 3"/>
    <property type="match status" value="1"/>
</dbReference>
<dbReference type="InterPro" id="IPR045867">
    <property type="entry name" value="DNA-dir_RpoC_beta_prime"/>
</dbReference>
<dbReference type="InterPro" id="IPR000722">
    <property type="entry name" value="RNA_pol_asu"/>
</dbReference>
<dbReference type="InterPro" id="IPR006592">
    <property type="entry name" value="RNA_pol_N"/>
</dbReference>
<dbReference type="InterPro" id="IPR007080">
    <property type="entry name" value="RNA_pol_Rpb1_1"/>
</dbReference>
<dbReference type="InterPro" id="IPR007066">
    <property type="entry name" value="RNA_pol_Rpb1_3"/>
</dbReference>
<dbReference type="InterPro" id="IPR042102">
    <property type="entry name" value="RNA_pol_Rpb1_3_sf"/>
</dbReference>
<dbReference type="InterPro" id="IPR007083">
    <property type="entry name" value="RNA_pol_Rpb1_4"/>
</dbReference>
<dbReference type="InterPro" id="IPR007081">
    <property type="entry name" value="RNA_pol_Rpb1_5"/>
</dbReference>
<dbReference type="InterPro" id="IPR007075">
    <property type="entry name" value="RNA_pol_Rpb1_6"/>
</dbReference>
<dbReference type="InterPro" id="IPR007073">
    <property type="entry name" value="RNA_pol_Rpb1_7"/>
</dbReference>
<dbReference type="InterPro" id="IPR038593">
    <property type="entry name" value="RNA_pol_Rpb1_7_sf"/>
</dbReference>
<dbReference type="InterPro" id="IPR044893">
    <property type="entry name" value="RNA_pol_Rpb1_clamp_domain"/>
</dbReference>
<dbReference type="InterPro" id="IPR038120">
    <property type="entry name" value="Rpb1_funnel_sf"/>
</dbReference>
<dbReference type="PANTHER" id="PTHR19376">
    <property type="entry name" value="DNA-DIRECTED RNA POLYMERASE"/>
    <property type="match status" value="1"/>
</dbReference>
<dbReference type="PANTHER" id="PTHR19376:SF37">
    <property type="entry name" value="DNA-DIRECTED RNA POLYMERASE II SUBUNIT RPB1"/>
    <property type="match status" value="1"/>
</dbReference>
<dbReference type="Pfam" id="PF04997">
    <property type="entry name" value="RNA_pol_Rpb1_1"/>
    <property type="match status" value="1"/>
</dbReference>
<dbReference type="Pfam" id="PF00623">
    <property type="entry name" value="RNA_pol_Rpb1_2"/>
    <property type="match status" value="1"/>
</dbReference>
<dbReference type="Pfam" id="PF04983">
    <property type="entry name" value="RNA_pol_Rpb1_3"/>
    <property type="match status" value="1"/>
</dbReference>
<dbReference type="Pfam" id="PF05000">
    <property type="entry name" value="RNA_pol_Rpb1_4"/>
    <property type="match status" value="1"/>
</dbReference>
<dbReference type="Pfam" id="PF04998">
    <property type="entry name" value="RNA_pol_Rpb1_5"/>
    <property type="match status" value="1"/>
</dbReference>
<dbReference type="Pfam" id="PF04992">
    <property type="entry name" value="RNA_pol_Rpb1_6"/>
    <property type="match status" value="1"/>
</dbReference>
<dbReference type="Pfam" id="PF04990">
    <property type="entry name" value="RNA_pol_Rpb1_7"/>
    <property type="match status" value="1"/>
</dbReference>
<dbReference type="SMART" id="SM00663">
    <property type="entry name" value="RPOLA_N"/>
    <property type="match status" value="1"/>
</dbReference>
<dbReference type="SUPFAM" id="SSF64484">
    <property type="entry name" value="beta and beta-prime subunits of DNA dependent RNA-polymerase"/>
    <property type="match status" value="1"/>
</dbReference>
<accession>Q7T6X5</accession>
<gene>
    <name type="primary">RPO1</name>
    <name type="ordered locus">MIMI_R501</name>
</gene>
<comment type="function">
    <text evidence="1">DNA-dependent RNA polymerase catalyzes the transcription of DNA into RNA using the four ribonucleoside triphosphates as substrates.</text>
</comment>
<comment type="catalytic activity">
    <reaction>
        <text>RNA(n) + a ribonucleoside 5'-triphosphate = RNA(n+1) + diphosphate</text>
        <dbReference type="Rhea" id="RHEA:21248"/>
        <dbReference type="Rhea" id="RHEA-COMP:14527"/>
        <dbReference type="Rhea" id="RHEA-COMP:17342"/>
        <dbReference type="ChEBI" id="CHEBI:33019"/>
        <dbReference type="ChEBI" id="CHEBI:61557"/>
        <dbReference type="ChEBI" id="CHEBI:140395"/>
        <dbReference type="EC" id="2.7.7.6"/>
    </reaction>
</comment>
<comment type="subcellular location">
    <subcellularLocation>
        <location evidence="2">Virion</location>
    </subcellularLocation>
</comment>
<comment type="similarity">
    <text evidence="3">Belongs to the RNA polymerase beta' chain family.</text>
</comment>
<sequence length="1495" mass="169839">MEANKNTYSRLGDTIETVERIEFCINSNESIIRHSAIVDPNGITEAETFNSNNNEPVQGGVIDKRLGVTESHLECSTCGETALRCPGHFGHIKFVEPVFHMGYLIYLKHILSCICIRCNKLLVYKNEKEIAALIKNKQGKQRFAEIRSICKKVTHCQKENYGCGTPAHKISIDKRNGNIFLLAEPVKRTDEYDETGETRKRPQQILTPQLCYDILKSVSDEDCIIMGFDPAKSRPEDMIILNFPVPPVQVRPSIRAEILSSPTMDDDLTHKLIDIIKSNENLKNTKGDGSLIKYTSINDDFMLLQLHVATFFANDMAGLARSQQKNKKVTKSMSERLRGKEGRIRGNLMGKRVDMSARTVITSDPNIALNEVGVPLIIAKNLTFDEIVTEHNIEYLTQLVKNGKRVYPGANFVIKHVIDAEGNESGHIYHLKYVDKPISLKPGDIVKRQLIDGDIVIFNRQPSLHKLSMMGHKCHVIPDNNLLTFRVNVSVTDPYNADFDGDEMNLHVPQSIQTATEILLIANASRRFVSPATSNIAIKAKQDTLMGSYVQTEPDMEIDWRDAMSILMSTSVKLDNDIPKYQNVSGKFLYSQIIPEGLNITKRKNDKEFQLKIKNGELTDGTLGKSEISSILQRIWFQYGSKETQEFIDDAQRMILQFLMRYGYTVSIKDTVIGEKVNQYIYDLIETKRKETLAFITEYDNDPYVMTKDAFEIKLQENLKSVQDEIKNTVMRNFDKNSGIFIAISSGSSGEPMNAGQIAGCIGQVIVEGKRIQIRFNGRTLPMFPKFDDSAFSRGFCRNSFIEGLGPFEFFFQVMAGREGIINTAIKTADTGYIQRKLVKMLEDIKQEYDGTVRNANGKLISCVYGDNGINTENQVDQKIDLISANDNKVRNDYVYTEDEIKYLIKNHKTDKRYTTDLNNSLYRKLISMRDQLRRIQRLVNLTSAEFKETYKMPVDIQQFIFNIINRDVRNNNVVVDPYYVLKMIKDMYYGSDSKIMKYNNRTSRIKKEDEKRIKFLMKIYLYDVLAPKKCTHVYKFSKQEFDEIVDYFKKTIMLAKVEGGEMVGFVAAQSIGEPVTQTNLKSFHKSGTGKTVSGGLVRVKELLGISKNIKTPITEIILEEKYKNDKITASRIASYLKYTTLRDVVEKADVIYDPEPFSKDGLMKKDGVDNIFDQEQGKTGCQTDIKNLPWVLRIMLSKEKMIERNINMLEIKTSFCRNWGTRNEDKTSKKEFNKVIDKITQCAIVTNYDNSQVPIVHVRFDANNYNLNTLIQFQEMVINTYKIKGISNITESNNIIEESYVDFDDEGNVVKKKQYVIIAEGINLSEMSQINGIDLLRTKCNDIVTIYEMYGVEAARTAFIKEFTAAIESSGGFSNYQHIEILADAITHMGGLIPVNRHGANKLDTDPFSRASFEKTVEQLLAAAVFGESDHMRSVSARIMVGALINGGTGCFDLLLDHKKIQQSLVESEEVVAPVVPIKKKTVLDDLISKKKSK</sequence>
<proteinExistence type="evidence at protein level"/>
<name>RPO1_MIMIV</name>
<feature type="chain" id="PRO_0000073917" description="DNA-directed RNA polymerase subunit 1">
    <location>
        <begin position="1"/>
        <end position="1495"/>
    </location>
</feature>